<keyword id="KW-0067">ATP-binding</keyword>
<keyword id="KW-0190">Covalent protein-DNA linkage</keyword>
<keyword id="KW-0235">DNA replication</keyword>
<keyword id="KW-0238">DNA-binding</keyword>
<keyword id="KW-0255">Endonuclease</keyword>
<keyword id="KW-0347">Helicase</keyword>
<keyword id="KW-1048">Host nucleus</keyword>
<keyword id="KW-0378">Hydrolase</keyword>
<keyword id="KW-0479">Metal-binding</keyword>
<keyword id="KW-0511">Multifunctional enzyme</keyword>
<keyword id="KW-0540">Nuclease</keyword>
<keyword id="KW-0547">Nucleotide-binding</keyword>
<keyword id="KW-0548">Nucleotidyltransferase</keyword>
<keyword id="KW-1185">Reference proteome</keyword>
<keyword id="KW-0808">Transferase</keyword>
<accession>Q87009</accession>
<organism>
    <name type="scientific">Subterranean clover stunt C2 alphasatellite</name>
    <name type="common">SCSC2A</name>
    <dbReference type="NCBI Taxonomy" id="1458458"/>
    <lineage>
        <taxon>Viruses</taxon>
        <taxon>Viruses incertae sedis</taxon>
        <taxon>Alphasatellitidae</taxon>
        <taxon>Nanoalphasatellitinae</taxon>
    </lineage>
</organism>
<dbReference type="EC" id="2.7.7.-"/>
<dbReference type="EC" id="3.1.21.-"/>
<dbReference type="EC" id="3.6.1.-"/>
<dbReference type="EMBL" id="U16731">
    <property type="protein sequence ID" value="AAA68018.1"/>
    <property type="molecule type" value="Genomic_DNA"/>
</dbReference>
<dbReference type="SMR" id="Q87009"/>
<dbReference type="KEGG" id="vg:18479560"/>
<dbReference type="Proteomes" id="UP001515440">
    <property type="component" value="Segment 2"/>
</dbReference>
<dbReference type="GO" id="GO:0042025">
    <property type="term" value="C:host cell nucleus"/>
    <property type="evidence" value="ECO:0007669"/>
    <property type="project" value="UniProtKB-SubCell"/>
</dbReference>
<dbReference type="GO" id="GO:0005524">
    <property type="term" value="F:ATP binding"/>
    <property type="evidence" value="ECO:0007669"/>
    <property type="project" value="UniProtKB-KW"/>
</dbReference>
<dbReference type="GO" id="GO:0016887">
    <property type="term" value="F:ATP hydrolysis activity"/>
    <property type="evidence" value="ECO:0007669"/>
    <property type="project" value="RHEA"/>
</dbReference>
<dbReference type="GO" id="GO:0003677">
    <property type="term" value="F:DNA binding"/>
    <property type="evidence" value="ECO:0007669"/>
    <property type="project" value="UniProtKB-KW"/>
</dbReference>
<dbReference type="GO" id="GO:0004519">
    <property type="term" value="F:endonuclease activity"/>
    <property type="evidence" value="ECO:0007669"/>
    <property type="project" value="UniProtKB-KW"/>
</dbReference>
<dbReference type="GO" id="GO:0046872">
    <property type="term" value="F:metal ion binding"/>
    <property type="evidence" value="ECO:0007669"/>
    <property type="project" value="UniProtKB-KW"/>
</dbReference>
<dbReference type="GO" id="GO:0016779">
    <property type="term" value="F:nucleotidyltransferase activity"/>
    <property type="evidence" value="ECO:0007669"/>
    <property type="project" value="UniProtKB-KW"/>
</dbReference>
<dbReference type="GO" id="GO:0003723">
    <property type="term" value="F:RNA binding"/>
    <property type="evidence" value="ECO:0007669"/>
    <property type="project" value="InterPro"/>
</dbReference>
<dbReference type="GO" id="GO:0003724">
    <property type="term" value="F:RNA helicase activity"/>
    <property type="evidence" value="ECO:0007669"/>
    <property type="project" value="InterPro"/>
</dbReference>
<dbReference type="GO" id="GO:0006260">
    <property type="term" value="P:DNA replication"/>
    <property type="evidence" value="ECO:0007669"/>
    <property type="project" value="UniProtKB-KW"/>
</dbReference>
<dbReference type="Gene3D" id="3.40.1310.20">
    <property type="match status" value="1"/>
</dbReference>
<dbReference type="InterPro" id="IPR049912">
    <property type="entry name" value="CRESS_DNA_REP"/>
</dbReference>
<dbReference type="InterPro" id="IPR000605">
    <property type="entry name" value="Helicase_SF3_ssDNA/RNA_vir"/>
</dbReference>
<dbReference type="Pfam" id="PF00910">
    <property type="entry name" value="RNA_helicase"/>
    <property type="match status" value="1"/>
</dbReference>
<dbReference type="Pfam" id="PF02407">
    <property type="entry name" value="Viral_Rep"/>
    <property type="match status" value="1"/>
</dbReference>
<dbReference type="PROSITE" id="PS52020">
    <property type="entry name" value="CRESS_DNA_REP"/>
    <property type="match status" value="1"/>
</dbReference>
<comment type="function">
    <text evidence="1">Initiates and terminates the replication only of its own subviral DNA molecule. The closed circular ssDNA genome is first converted to a superhelical dsDNA. Rep binds a specific hairpin at the genome origin of replication. Introduces an endonucleolytic nick within the intergenic region of the genome, thereby initiating the rolling circle replication (RCR). Following cleavage, binds covalently to the 5'-phosphate of DNA as a tyrosyl ester. The cleavage gives rise to a free 3'-OH that serves as a primer for the cellular DNA polymerase. The polymerase synthesizes the (+) strand DNA by rolling circle mechanism. After one round of replication, a Rep-catalyzed nucleotidyl transfer reaction releases a circular single-stranded virus genome, thereby terminating the replication. Displays origin-specific DNA cleavage, nucleotidyl transferase, ATPase and helicase activities (By similarity).</text>
</comment>
<comment type="catalytic activity">
    <reaction>
        <text>ATP + H2O = ADP + phosphate + H(+)</text>
        <dbReference type="Rhea" id="RHEA:13065"/>
        <dbReference type="ChEBI" id="CHEBI:15377"/>
        <dbReference type="ChEBI" id="CHEBI:15378"/>
        <dbReference type="ChEBI" id="CHEBI:30616"/>
        <dbReference type="ChEBI" id="CHEBI:43474"/>
        <dbReference type="ChEBI" id="CHEBI:456216"/>
    </reaction>
</comment>
<comment type="cofactor">
    <cofactor evidence="1">
        <name>Mg(2+)</name>
        <dbReference type="ChEBI" id="CHEBI:18420"/>
    </cofactor>
    <cofactor evidence="1">
        <name>Mn(2+)</name>
        <dbReference type="ChEBI" id="CHEBI:29035"/>
    </cofactor>
    <text evidence="1">Divalent metal cations, possibly Mg(2+) or Mn(2+).</text>
</comment>
<comment type="subunit">
    <text evidence="1 4">Homooligomer (Potential). Rep binds to repeated DNA motifs (iterons) (By similarity).</text>
</comment>
<comment type="subcellular location">
    <subcellularLocation>
        <location evidence="4">Host nucleus</location>
    </subcellularLocation>
</comment>
<comment type="domain">
    <text>There are 3 rolling circle replication (RCR) motifs. RCR-2 is probably involved in metal coordination. RCR-3 is required for phosphodiester bond cleavage for initiation of RCR.</text>
</comment>
<comment type="miscellaneous">
    <text>The genome of nanoviruses is composed of six to eight segments. In addition, some isolates contain subviral DNAs.</text>
</comment>
<comment type="similarity">
    <text evidence="4">Belongs to the nanoviridea/circoviridae replication-associated protein family.</text>
</comment>
<comment type="caution">
    <text evidence="4">This protein is encoded by a subviral DNA that is not present in all isolates of the virus.</text>
</comment>
<protein>
    <recommendedName>
        <fullName>Para-Rep C2</fullName>
        <shortName>Rep2</shortName>
        <ecNumber>2.7.7.-</ecNumber>
        <ecNumber>3.1.21.-</ecNumber>
        <ecNumber>3.6.1.-</ecNumber>
    </recommendedName>
    <alternativeName>
        <fullName>Replication-associated protein of non-essential DNA C2</fullName>
    </alternativeName>
</protein>
<evidence type="ECO:0000250" key="1"/>
<evidence type="ECO:0000255" key="2"/>
<evidence type="ECO:0000255" key="3">
    <source>
        <dbReference type="PROSITE-ProRule" id="PRU01364"/>
    </source>
</evidence>
<evidence type="ECO:0000305" key="4"/>
<feature type="chain" id="PRO_0000378523" description="Para-Rep C2">
    <location>
        <begin position="1"/>
        <end position="280"/>
    </location>
</feature>
<feature type="domain" description="CRESS-DNA virus Rep endonuclease" evidence="3">
    <location>
        <begin position="1"/>
        <end position="97"/>
    </location>
</feature>
<feature type="short sequence motif" description="RCR-1" evidence="3">
    <location>
        <begin position="6"/>
        <end position="9"/>
    </location>
</feature>
<feature type="short sequence motif" description="RCR-2" evidence="3">
    <location>
        <begin position="45"/>
        <end position="47"/>
    </location>
</feature>
<feature type="short sequence motif" description="Nuclear localization signal" evidence="2">
    <location>
        <begin position="54"/>
        <end position="75"/>
    </location>
</feature>
<feature type="short sequence motif" description="RCR-3" evidence="3">
    <location>
        <begin position="84"/>
        <end position="87"/>
    </location>
</feature>
<feature type="short sequence motif" description="Nuclear localization signal" evidence="2">
    <location>
        <begin position="97"/>
        <end position="103"/>
    </location>
</feature>
<feature type="active site" description="For DNA cleavage activity" evidence="3">
    <location>
        <position position="84"/>
    </location>
</feature>
<feature type="binding site" evidence="2">
    <location>
        <position position="37"/>
    </location>
    <ligand>
        <name>a divalent metal cation</name>
        <dbReference type="ChEBI" id="CHEBI:60240"/>
    </ligand>
</feature>
<feature type="binding site" evidence="2">
    <location>
        <position position="45"/>
    </location>
    <ligand>
        <name>a divalent metal cation</name>
        <dbReference type="ChEBI" id="CHEBI:60240"/>
    </ligand>
</feature>
<feature type="binding site" evidence="1">
    <location>
        <begin position="172"/>
        <end position="180"/>
    </location>
    <ligand>
        <name>ATP</name>
        <dbReference type="ChEBI" id="CHEBI:30616"/>
    </ligand>
</feature>
<gene>
    <name type="primary">C2</name>
</gene>
<sequence>MARRYCFTLNYATEIERETFLSLFSQDELNYFVVGDETATTGQKHLQGFVSFKNKIRLGGLKKKFGNRAHWEIARGSDSQNRDYCCKETLISEIGIPVMKGSNKRKTMEIYEEDPEEMQLKDPDTALRCKAKKLKEEYCSCYDFQKLRPWQIELHAALMAEPDDRSIIWVYGSDGGEGKTSFAKELIRYGWFYTAGGKTQDVLYMYAQDPERNIAFDVPRCSSEMMNYQAMEMLKNRVFASTKYRPVDLCIRKLVHLIVFANVAPDPTRISEDRLVIINC</sequence>
<proteinExistence type="inferred from homology"/>
<name>REP2_SCSC2</name>
<reference key="1">
    <citation type="journal article" date="1995" name="Virology">
        <title>Sequence of subterranean clover stunt virus DNA: affinities with the geminiviruses.</title>
        <authorList>
            <person name="Boevink P.C."/>
            <person name="Chu P.W.G."/>
            <person name="Keese P.K."/>
        </authorList>
    </citation>
    <scope>NUCLEOTIDE SEQUENCE [GENOMIC DNA]</scope>
</reference>